<name>RL30_SALAI</name>
<protein>
    <recommendedName>
        <fullName evidence="1">Large ribosomal subunit protein uL30</fullName>
    </recommendedName>
    <alternativeName>
        <fullName evidence="2">50S ribosomal protein L30</fullName>
    </alternativeName>
</protein>
<reference key="1">
    <citation type="submission" date="2007-10" db="EMBL/GenBank/DDBJ databases">
        <title>Complete sequence of Salinispora arenicola CNS-205.</title>
        <authorList>
            <consortium name="US DOE Joint Genome Institute"/>
            <person name="Copeland A."/>
            <person name="Lucas S."/>
            <person name="Lapidus A."/>
            <person name="Barry K."/>
            <person name="Glavina del Rio T."/>
            <person name="Dalin E."/>
            <person name="Tice H."/>
            <person name="Pitluck S."/>
            <person name="Foster B."/>
            <person name="Schmutz J."/>
            <person name="Larimer F."/>
            <person name="Land M."/>
            <person name="Hauser L."/>
            <person name="Kyrpides N."/>
            <person name="Ivanova N."/>
            <person name="Jensen P.R."/>
            <person name="Moore B.S."/>
            <person name="Penn K."/>
            <person name="Jenkins C."/>
            <person name="Udwary D."/>
            <person name="Xiang L."/>
            <person name="Gontang E."/>
            <person name="Richardson P."/>
        </authorList>
    </citation>
    <scope>NUCLEOTIDE SEQUENCE [LARGE SCALE GENOMIC DNA]</scope>
    <source>
        <strain>CNS-205</strain>
    </source>
</reference>
<keyword id="KW-0687">Ribonucleoprotein</keyword>
<keyword id="KW-0689">Ribosomal protein</keyword>
<feature type="chain" id="PRO_1000087261" description="Large ribosomal subunit protein uL30">
    <location>
        <begin position="1"/>
        <end position="60"/>
    </location>
</feature>
<sequence>MARLKVTQVRSEIGTKRNQRDSLRSLGLKRINDVVVKEDRPEIRGMIFTVNHLVKVEEVE</sequence>
<comment type="subunit">
    <text evidence="1">Part of the 50S ribosomal subunit.</text>
</comment>
<comment type="similarity">
    <text evidence="1">Belongs to the universal ribosomal protein uL30 family.</text>
</comment>
<proteinExistence type="inferred from homology"/>
<organism>
    <name type="scientific">Salinispora arenicola (strain CNS-205)</name>
    <dbReference type="NCBI Taxonomy" id="391037"/>
    <lineage>
        <taxon>Bacteria</taxon>
        <taxon>Bacillati</taxon>
        <taxon>Actinomycetota</taxon>
        <taxon>Actinomycetes</taxon>
        <taxon>Micromonosporales</taxon>
        <taxon>Micromonosporaceae</taxon>
        <taxon>Salinispora</taxon>
    </lineage>
</organism>
<dbReference type="EMBL" id="CP000850">
    <property type="protein sequence ID" value="ABW00079.1"/>
    <property type="molecule type" value="Genomic_DNA"/>
</dbReference>
<dbReference type="SMR" id="A8M511"/>
<dbReference type="STRING" id="391037.Sare_4297"/>
<dbReference type="KEGG" id="saq:Sare_4297"/>
<dbReference type="eggNOG" id="COG1841">
    <property type="taxonomic scope" value="Bacteria"/>
</dbReference>
<dbReference type="HOGENOM" id="CLU_131047_2_0_11"/>
<dbReference type="OrthoDB" id="9812790at2"/>
<dbReference type="GO" id="GO:0022625">
    <property type="term" value="C:cytosolic large ribosomal subunit"/>
    <property type="evidence" value="ECO:0007669"/>
    <property type="project" value="TreeGrafter"/>
</dbReference>
<dbReference type="GO" id="GO:0003735">
    <property type="term" value="F:structural constituent of ribosome"/>
    <property type="evidence" value="ECO:0007669"/>
    <property type="project" value="InterPro"/>
</dbReference>
<dbReference type="GO" id="GO:0006412">
    <property type="term" value="P:translation"/>
    <property type="evidence" value="ECO:0007669"/>
    <property type="project" value="UniProtKB-UniRule"/>
</dbReference>
<dbReference type="CDD" id="cd01658">
    <property type="entry name" value="Ribosomal_L30"/>
    <property type="match status" value="1"/>
</dbReference>
<dbReference type="FunFam" id="3.30.1390.20:FF:000001">
    <property type="entry name" value="50S ribosomal protein L30"/>
    <property type="match status" value="1"/>
</dbReference>
<dbReference type="Gene3D" id="3.30.1390.20">
    <property type="entry name" value="Ribosomal protein L30, ferredoxin-like fold domain"/>
    <property type="match status" value="1"/>
</dbReference>
<dbReference type="HAMAP" id="MF_01371_B">
    <property type="entry name" value="Ribosomal_uL30_B"/>
    <property type="match status" value="1"/>
</dbReference>
<dbReference type="InterPro" id="IPR036919">
    <property type="entry name" value="Ribo_uL30_ferredoxin-like_sf"/>
</dbReference>
<dbReference type="InterPro" id="IPR005996">
    <property type="entry name" value="Ribosomal_uL30_bac-type"/>
</dbReference>
<dbReference type="InterPro" id="IPR016082">
    <property type="entry name" value="Ribosomal_uL30_ferredoxin-like"/>
</dbReference>
<dbReference type="NCBIfam" id="TIGR01308">
    <property type="entry name" value="rpmD_bact"/>
    <property type="match status" value="1"/>
</dbReference>
<dbReference type="PANTHER" id="PTHR15892:SF2">
    <property type="entry name" value="LARGE RIBOSOMAL SUBUNIT PROTEIN UL30M"/>
    <property type="match status" value="1"/>
</dbReference>
<dbReference type="PANTHER" id="PTHR15892">
    <property type="entry name" value="MITOCHONDRIAL RIBOSOMAL PROTEIN L30"/>
    <property type="match status" value="1"/>
</dbReference>
<dbReference type="Pfam" id="PF00327">
    <property type="entry name" value="Ribosomal_L30"/>
    <property type="match status" value="1"/>
</dbReference>
<dbReference type="PIRSF" id="PIRSF002211">
    <property type="entry name" value="Ribosomal_L30_bac-type"/>
    <property type="match status" value="1"/>
</dbReference>
<dbReference type="SUPFAM" id="SSF55129">
    <property type="entry name" value="Ribosomal protein L30p/L7e"/>
    <property type="match status" value="1"/>
</dbReference>
<gene>
    <name evidence="1" type="primary">rpmD</name>
    <name type="ordered locus">Sare_4297</name>
</gene>
<accession>A8M511</accession>
<evidence type="ECO:0000255" key="1">
    <source>
        <dbReference type="HAMAP-Rule" id="MF_01371"/>
    </source>
</evidence>
<evidence type="ECO:0000305" key="2"/>